<organism>
    <name type="scientific">Rhodococcus opacus (strain B4)</name>
    <dbReference type="NCBI Taxonomy" id="632772"/>
    <lineage>
        <taxon>Bacteria</taxon>
        <taxon>Bacillati</taxon>
        <taxon>Actinomycetota</taxon>
        <taxon>Actinomycetes</taxon>
        <taxon>Mycobacteriales</taxon>
        <taxon>Nocardiaceae</taxon>
        <taxon>Rhodococcus</taxon>
    </lineage>
</organism>
<dbReference type="EC" id="6.1.1.16" evidence="1"/>
<dbReference type="EMBL" id="AP011115">
    <property type="protein sequence ID" value="BAH52627.1"/>
    <property type="molecule type" value="Genomic_DNA"/>
</dbReference>
<dbReference type="RefSeq" id="WP_012691552.1">
    <property type="nucleotide sequence ID" value="NC_012522.1"/>
</dbReference>
<dbReference type="SMR" id="C1BAC4"/>
<dbReference type="STRING" id="632772.ROP_43800"/>
<dbReference type="KEGG" id="rop:ROP_43800"/>
<dbReference type="PATRIC" id="fig|632772.20.peg.4587"/>
<dbReference type="HOGENOM" id="CLU_013528_0_1_11"/>
<dbReference type="OrthoDB" id="9815130at2"/>
<dbReference type="Proteomes" id="UP000002212">
    <property type="component" value="Chromosome"/>
</dbReference>
<dbReference type="GO" id="GO:0005829">
    <property type="term" value="C:cytosol"/>
    <property type="evidence" value="ECO:0007669"/>
    <property type="project" value="TreeGrafter"/>
</dbReference>
<dbReference type="GO" id="GO:0005524">
    <property type="term" value="F:ATP binding"/>
    <property type="evidence" value="ECO:0007669"/>
    <property type="project" value="UniProtKB-UniRule"/>
</dbReference>
<dbReference type="GO" id="GO:0004817">
    <property type="term" value="F:cysteine-tRNA ligase activity"/>
    <property type="evidence" value="ECO:0007669"/>
    <property type="project" value="UniProtKB-UniRule"/>
</dbReference>
<dbReference type="GO" id="GO:0008270">
    <property type="term" value="F:zinc ion binding"/>
    <property type="evidence" value="ECO:0007669"/>
    <property type="project" value="UniProtKB-UniRule"/>
</dbReference>
<dbReference type="GO" id="GO:0006423">
    <property type="term" value="P:cysteinyl-tRNA aminoacylation"/>
    <property type="evidence" value="ECO:0007669"/>
    <property type="project" value="UniProtKB-UniRule"/>
</dbReference>
<dbReference type="CDD" id="cd00672">
    <property type="entry name" value="CysRS_core"/>
    <property type="match status" value="1"/>
</dbReference>
<dbReference type="FunFam" id="3.40.50.620:FF:000068">
    <property type="entry name" value="Cysteine--tRNA ligase"/>
    <property type="match status" value="1"/>
</dbReference>
<dbReference type="Gene3D" id="1.20.120.1910">
    <property type="entry name" value="Cysteine-tRNA ligase, C-terminal anti-codon recognition domain"/>
    <property type="match status" value="1"/>
</dbReference>
<dbReference type="Gene3D" id="3.40.50.620">
    <property type="entry name" value="HUPs"/>
    <property type="match status" value="1"/>
</dbReference>
<dbReference type="HAMAP" id="MF_00041">
    <property type="entry name" value="Cys_tRNA_synth"/>
    <property type="match status" value="1"/>
</dbReference>
<dbReference type="InterPro" id="IPR015803">
    <property type="entry name" value="Cys-tRNA-ligase"/>
</dbReference>
<dbReference type="InterPro" id="IPR015273">
    <property type="entry name" value="Cys-tRNA-synt_Ia_DALR"/>
</dbReference>
<dbReference type="InterPro" id="IPR024909">
    <property type="entry name" value="Cys-tRNA/MSH_ligase"/>
</dbReference>
<dbReference type="InterPro" id="IPR014729">
    <property type="entry name" value="Rossmann-like_a/b/a_fold"/>
</dbReference>
<dbReference type="InterPro" id="IPR032678">
    <property type="entry name" value="tRNA-synt_1_cat_dom"/>
</dbReference>
<dbReference type="InterPro" id="IPR009080">
    <property type="entry name" value="tRNAsynth_Ia_anticodon-bd"/>
</dbReference>
<dbReference type="NCBIfam" id="TIGR00435">
    <property type="entry name" value="cysS"/>
    <property type="match status" value="1"/>
</dbReference>
<dbReference type="PANTHER" id="PTHR10890:SF30">
    <property type="entry name" value="CYSTEINE--TRNA LIGASE"/>
    <property type="match status" value="1"/>
</dbReference>
<dbReference type="PANTHER" id="PTHR10890">
    <property type="entry name" value="CYSTEINYL-TRNA SYNTHETASE"/>
    <property type="match status" value="1"/>
</dbReference>
<dbReference type="Pfam" id="PF09190">
    <property type="entry name" value="DALR_2"/>
    <property type="match status" value="1"/>
</dbReference>
<dbReference type="Pfam" id="PF01406">
    <property type="entry name" value="tRNA-synt_1e"/>
    <property type="match status" value="1"/>
</dbReference>
<dbReference type="PRINTS" id="PR00983">
    <property type="entry name" value="TRNASYNTHCYS"/>
</dbReference>
<dbReference type="SMART" id="SM00840">
    <property type="entry name" value="DALR_2"/>
    <property type="match status" value="1"/>
</dbReference>
<dbReference type="SUPFAM" id="SSF47323">
    <property type="entry name" value="Anticodon-binding domain of a subclass of class I aminoacyl-tRNA synthetases"/>
    <property type="match status" value="1"/>
</dbReference>
<dbReference type="SUPFAM" id="SSF52374">
    <property type="entry name" value="Nucleotidylyl transferase"/>
    <property type="match status" value="1"/>
</dbReference>
<gene>
    <name evidence="1" type="primary">cysS</name>
    <name type="ordered locus">ROP_43800</name>
</gene>
<protein>
    <recommendedName>
        <fullName evidence="1">Cysteine--tRNA ligase</fullName>
        <ecNumber evidence="1">6.1.1.16</ecNumber>
    </recommendedName>
    <alternativeName>
        <fullName evidence="1">Cysteinyl-tRNA synthetase</fullName>
        <shortName evidence="1">CysRS</shortName>
    </alternativeName>
</protein>
<accession>C1BAC4</accession>
<name>SYC_RHOOB</name>
<comment type="catalytic activity">
    <reaction evidence="1">
        <text>tRNA(Cys) + L-cysteine + ATP = L-cysteinyl-tRNA(Cys) + AMP + diphosphate</text>
        <dbReference type="Rhea" id="RHEA:17773"/>
        <dbReference type="Rhea" id="RHEA-COMP:9661"/>
        <dbReference type="Rhea" id="RHEA-COMP:9679"/>
        <dbReference type="ChEBI" id="CHEBI:30616"/>
        <dbReference type="ChEBI" id="CHEBI:33019"/>
        <dbReference type="ChEBI" id="CHEBI:35235"/>
        <dbReference type="ChEBI" id="CHEBI:78442"/>
        <dbReference type="ChEBI" id="CHEBI:78517"/>
        <dbReference type="ChEBI" id="CHEBI:456215"/>
        <dbReference type="EC" id="6.1.1.16"/>
    </reaction>
</comment>
<comment type="cofactor">
    <cofactor evidence="1">
        <name>Zn(2+)</name>
        <dbReference type="ChEBI" id="CHEBI:29105"/>
    </cofactor>
    <text evidence="1">Binds 1 zinc ion per subunit.</text>
</comment>
<comment type="subunit">
    <text evidence="1">Monomer.</text>
</comment>
<comment type="subcellular location">
    <subcellularLocation>
        <location evidence="1">Cytoplasm</location>
    </subcellularLocation>
</comment>
<comment type="similarity">
    <text evidence="1">Belongs to the class-I aminoacyl-tRNA synthetase family.</text>
</comment>
<reference key="1">
    <citation type="submission" date="2009-03" db="EMBL/GenBank/DDBJ databases">
        <title>Comparison of the complete genome sequences of Rhodococcus erythropolis PR4 and Rhodococcus opacus B4.</title>
        <authorList>
            <person name="Takarada H."/>
            <person name="Sekine M."/>
            <person name="Hosoyama A."/>
            <person name="Yamada R."/>
            <person name="Fujisawa T."/>
            <person name="Omata S."/>
            <person name="Shimizu A."/>
            <person name="Tsukatani N."/>
            <person name="Tanikawa S."/>
            <person name="Fujita N."/>
            <person name="Harayama S."/>
        </authorList>
    </citation>
    <scope>NUCLEOTIDE SEQUENCE [LARGE SCALE GENOMIC DNA]</scope>
    <source>
        <strain>B4</strain>
    </source>
</reference>
<evidence type="ECO:0000255" key="1">
    <source>
        <dbReference type="HAMAP-Rule" id="MF_00041"/>
    </source>
</evidence>
<sequence length="464" mass="51569">MTLRLFDTETRALRDFAPLAPGHASVYLCGATVQGDPHIGHVRSGVAFDVLRRWLLAHDYDVAFVRNVTDIEDKILNKAAEAGRPWWEWAATFERSFTWAYQQLGVLPPSVEPRATGHITQMVEMMQRLIDNGHAYAAGGDVYFDVRSYPRYGSLSGHKLDDVHQGESAGECKRDPRDFTLWKAEKPGEPSWPTPWGRGRPGWHLECSAMAEFYLGAAFDIHCGGLDLVFPHHENEIAQAKCAGDDFAQYWLHNGWVTMGGEKMSKSLGNVLSVPNVLKKVRPQELRYYLGSAHYRSMLEYSDTALDEGAAAYRRIESFVMRTQERAGEVTIGRWTDAFARALDDDLAVPAALAEVHGKVREGNIALDGGDLEGARAIASQVRAMLGILGVDPLDEHWTQETADASAATDALDVLVRAELERRQTARAEKNWAVADEVRDRLIRAGIEVTDTPNGPEWSLKAGQ</sequence>
<keyword id="KW-0030">Aminoacyl-tRNA synthetase</keyword>
<keyword id="KW-0067">ATP-binding</keyword>
<keyword id="KW-0963">Cytoplasm</keyword>
<keyword id="KW-0436">Ligase</keyword>
<keyword id="KW-0479">Metal-binding</keyword>
<keyword id="KW-0547">Nucleotide-binding</keyword>
<keyword id="KW-0648">Protein biosynthesis</keyword>
<keyword id="KW-0862">Zinc</keyword>
<feature type="chain" id="PRO_1000199085" description="Cysteine--tRNA ligase">
    <location>
        <begin position="1"/>
        <end position="464"/>
    </location>
</feature>
<feature type="short sequence motif" description="'HIGH' region">
    <location>
        <begin position="31"/>
        <end position="41"/>
    </location>
</feature>
<feature type="short sequence motif" description="'KMSKS' region">
    <location>
        <begin position="263"/>
        <end position="267"/>
    </location>
</feature>
<feature type="binding site" evidence="1">
    <location>
        <position position="29"/>
    </location>
    <ligand>
        <name>Zn(2+)</name>
        <dbReference type="ChEBI" id="CHEBI:29105"/>
    </ligand>
</feature>
<feature type="binding site" evidence="1">
    <location>
        <position position="207"/>
    </location>
    <ligand>
        <name>Zn(2+)</name>
        <dbReference type="ChEBI" id="CHEBI:29105"/>
    </ligand>
</feature>
<feature type="binding site" evidence="1">
    <location>
        <position position="232"/>
    </location>
    <ligand>
        <name>Zn(2+)</name>
        <dbReference type="ChEBI" id="CHEBI:29105"/>
    </ligand>
</feature>
<feature type="binding site" evidence="1">
    <location>
        <position position="236"/>
    </location>
    <ligand>
        <name>Zn(2+)</name>
        <dbReference type="ChEBI" id="CHEBI:29105"/>
    </ligand>
</feature>
<feature type="binding site" evidence="1">
    <location>
        <position position="266"/>
    </location>
    <ligand>
        <name>ATP</name>
        <dbReference type="ChEBI" id="CHEBI:30616"/>
    </ligand>
</feature>
<proteinExistence type="inferred from homology"/>